<proteinExistence type="inferred from homology"/>
<accession>F5HE69</accession>
<feature type="chain" id="PRO_0000416726" description="Transmembrane protein US18">
    <location>
        <begin position="1"/>
        <end position="274"/>
    </location>
</feature>
<feature type="transmembrane region" description="Helical" evidence="1">
    <location>
        <begin position="49"/>
        <end position="69"/>
    </location>
</feature>
<feature type="transmembrane region" description="Helical" evidence="1">
    <location>
        <begin position="75"/>
        <end position="95"/>
    </location>
</feature>
<feature type="transmembrane region" description="Helical" evidence="1">
    <location>
        <begin position="108"/>
        <end position="128"/>
    </location>
</feature>
<feature type="transmembrane region" description="Helical" evidence="1">
    <location>
        <begin position="134"/>
        <end position="154"/>
    </location>
</feature>
<feature type="transmembrane region" description="Helical" evidence="1">
    <location>
        <begin position="168"/>
        <end position="188"/>
    </location>
</feature>
<feature type="transmembrane region" description="Helical" evidence="1">
    <location>
        <begin position="196"/>
        <end position="216"/>
    </location>
</feature>
<feature type="transmembrane region" description="Helical" evidence="1">
    <location>
        <begin position="228"/>
        <end position="248"/>
    </location>
</feature>
<organism>
    <name type="scientific">Human cytomegalovirus (strain Merlin)</name>
    <name type="common">HHV-5</name>
    <name type="synonym">Human herpesvirus 5</name>
    <dbReference type="NCBI Taxonomy" id="295027"/>
    <lineage>
        <taxon>Viruses</taxon>
        <taxon>Duplodnaviria</taxon>
        <taxon>Heunggongvirae</taxon>
        <taxon>Peploviricota</taxon>
        <taxon>Herviviricetes</taxon>
        <taxon>Herpesvirales</taxon>
        <taxon>Orthoherpesviridae</taxon>
        <taxon>Betaherpesvirinae</taxon>
        <taxon>Cytomegalovirus</taxon>
        <taxon>Cytomegalovirus humanbeta5</taxon>
        <taxon>Human cytomegalovirus</taxon>
    </lineage>
</organism>
<comment type="subcellular location">
    <subcellularLocation>
        <location evidence="2">Host membrane</location>
        <topology evidence="2">Multi-pass membrane protein</topology>
    </subcellularLocation>
</comment>
<comment type="similarity">
    <text evidence="2">Belongs to the cytomegalovirus US12 family.</text>
</comment>
<dbReference type="EMBL" id="AY446894">
    <property type="protein sequence ID" value="AAR31707.1"/>
    <property type="molecule type" value="Genomic_DNA"/>
</dbReference>
<dbReference type="RefSeq" id="YP_081603.1">
    <property type="nucleotide sequence ID" value="NC_006273.2"/>
</dbReference>
<dbReference type="GeneID" id="3077472"/>
<dbReference type="KEGG" id="vg:3077472"/>
<dbReference type="Reactome" id="R-HSA-9609690">
    <property type="pathway name" value="HCMV Early Events"/>
</dbReference>
<dbReference type="Proteomes" id="UP000000938">
    <property type="component" value="Segment"/>
</dbReference>
<dbReference type="GO" id="GO:0033644">
    <property type="term" value="C:host cell membrane"/>
    <property type="evidence" value="ECO:0007669"/>
    <property type="project" value="UniProtKB-SubCell"/>
</dbReference>
<dbReference type="GO" id="GO:0016020">
    <property type="term" value="C:membrane"/>
    <property type="evidence" value="ECO:0007669"/>
    <property type="project" value="UniProtKB-KW"/>
</dbReference>
<organismHost>
    <name type="scientific">Homo sapiens</name>
    <name type="common">Human</name>
    <dbReference type="NCBI Taxonomy" id="9606"/>
</organismHost>
<reference key="1">
    <citation type="journal article" date="2004" name="J. Gen. Virol.">
        <title>Genetic content of wild-type human cytomegalovirus.</title>
        <authorList>
            <person name="Dolan A."/>
            <person name="Cunningham C."/>
            <person name="Hector R.D."/>
            <person name="Hassan-Walker A.F."/>
            <person name="Lee L."/>
            <person name="Addison C."/>
            <person name="Dargan D.J."/>
            <person name="McGeoch D.J."/>
            <person name="Gatherer D."/>
            <person name="Emery V.C."/>
            <person name="Griffiths P.D."/>
            <person name="Sinzger C."/>
            <person name="McSharry B.P."/>
            <person name="Wilkinson G.W.G."/>
            <person name="Davison A.J."/>
        </authorList>
    </citation>
    <scope>NUCLEOTIDE SEQUENCE [LARGE SCALE GENOMIC DNA]</scope>
</reference>
<name>US18_HCMVM</name>
<sequence>MGDTASVSEHHESPTVTIVPLHRSHALVAEQQLFQWLKRFKLLMEVYHGLVWQLACTLTVCLLAWLAFPDVQGQCANGIVPALSSIVPVSTLAMLRGFAEFRPHTTNFAHLTVACLLINTGITVCTGFCGERRVIGLSFALVMVFFVLCSGLTYLAGNNPTRWKVIGIGYGWSVIVFYLLLYFSPVLWVSKIYSGLYVLVVTAASAVLIYETLDLIYQRGTLSKNSVCVSVVLYTIVMSLLNMSVAIFSGHVWVQQYAEKHGGRIDGVSLLSLL</sequence>
<keyword id="KW-1043">Host membrane</keyword>
<keyword id="KW-0426">Late protein</keyword>
<keyword id="KW-0472">Membrane</keyword>
<keyword id="KW-1185">Reference proteome</keyword>
<keyword id="KW-0812">Transmembrane</keyword>
<keyword id="KW-1133">Transmembrane helix</keyword>
<evidence type="ECO:0000255" key="1"/>
<evidence type="ECO:0000305" key="2"/>
<protein>
    <recommendedName>
        <fullName>Transmembrane protein US18</fullName>
    </recommendedName>
</protein>
<gene>
    <name type="primary">US18</name>
</gene>